<reference key="1">
    <citation type="submission" date="2008-02" db="EMBL/GenBank/DDBJ databases">
        <title>Complete sequence of Escherichia coli C str. ATCC 8739.</title>
        <authorList>
            <person name="Copeland A."/>
            <person name="Lucas S."/>
            <person name="Lapidus A."/>
            <person name="Glavina del Rio T."/>
            <person name="Dalin E."/>
            <person name="Tice H."/>
            <person name="Bruce D."/>
            <person name="Goodwin L."/>
            <person name="Pitluck S."/>
            <person name="Kiss H."/>
            <person name="Brettin T."/>
            <person name="Detter J.C."/>
            <person name="Han C."/>
            <person name="Kuske C.R."/>
            <person name="Schmutz J."/>
            <person name="Larimer F."/>
            <person name="Land M."/>
            <person name="Hauser L."/>
            <person name="Kyrpides N."/>
            <person name="Mikhailova N."/>
            <person name="Ingram L."/>
            <person name="Richardson P."/>
        </authorList>
    </citation>
    <scope>NUCLEOTIDE SEQUENCE [LARGE SCALE GENOMIC DNA]</scope>
    <source>
        <strain>ATCC 8739 / DSM 1576 / NBRC 3972 / NCIMB 8545 / WDCM 00012 / Crooks</strain>
    </source>
</reference>
<organism>
    <name type="scientific">Escherichia coli (strain ATCC 8739 / DSM 1576 / NBRC 3972 / NCIMB 8545 / WDCM 00012 / Crooks)</name>
    <dbReference type="NCBI Taxonomy" id="481805"/>
    <lineage>
        <taxon>Bacteria</taxon>
        <taxon>Pseudomonadati</taxon>
        <taxon>Pseudomonadota</taxon>
        <taxon>Gammaproteobacteria</taxon>
        <taxon>Enterobacterales</taxon>
        <taxon>Enterobacteriaceae</taxon>
        <taxon>Escherichia</taxon>
    </lineage>
</organism>
<gene>
    <name evidence="1" type="primary">panD</name>
    <name type="ordered locus">EcolC_3528</name>
</gene>
<dbReference type="EC" id="4.1.1.11" evidence="1"/>
<dbReference type="EMBL" id="CP000946">
    <property type="protein sequence ID" value="ACA79142.1"/>
    <property type="molecule type" value="Genomic_DNA"/>
</dbReference>
<dbReference type="RefSeq" id="WP_000621515.1">
    <property type="nucleotide sequence ID" value="NZ_MTFT01000035.1"/>
</dbReference>
<dbReference type="SMR" id="B1IQK9"/>
<dbReference type="GeneID" id="93777305"/>
<dbReference type="KEGG" id="ecl:EcolC_3528"/>
<dbReference type="HOGENOM" id="CLU_115305_2_1_6"/>
<dbReference type="UniPathway" id="UPA00028">
    <property type="reaction ID" value="UER00002"/>
</dbReference>
<dbReference type="GO" id="GO:0005829">
    <property type="term" value="C:cytosol"/>
    <property type="evidence" value="ECO:0007669"/>
    <property type="project" value="TreeGrafter"/>
</dbReference>
<dbReference type="GO" id="GO:0004068">
    <property type="term" value="F:aspartate 1-decarboxylase activity"/>
    <property type="evidence" value="ECO:0007669"/>
    <property type="project" value="UniProtKB-UniRule"/>
</dbReference>
<dbReference type="GO" id="GO:0006523">
    <property type="term" value="P:alanine biosynthetic process"/>
    <property type="evidence" value="ECO:0007669"/>
    <property type="project" value="InterPro"/>
</dbReference>
<dbReference type="GO" id="GO:0015940">
    <property type="term" value="P:pantothenate biosynthetic process"/>
    <property type="evidence" value="ECO:0007669"/>
    <property type="project" value="UniProtKB-UniRule"/>
</dbReference>
<dbReference type="CDD" id="cd06919">
    <property type="entry name" value="Asp_decarbox"/>
    <property type="match status" value="1"/>
</dbReference>
<dbReference type="FunFam" id="2.40.40.20:FF:000004">
    <property type="entry name" value="Aspartate 1-decarboxylase"/>
    <property type="match status" value="1"/>
</dbReference>
<dbReference type="Gene3D" id="2.40.40.20">
    <property type="match status" value="1"/>
</dbReference>
<dbReference type="HAMAP" id="MF_00446">
    <property type="entry name" value="PanD"/>
    <property type="match status" value="1"/>
</dbReference>
<dbReference type="InterPro" id="IPR009010">
    <property type="entry name" value="Asp_de-COase-like_dom_sf"/>
</dbReference>
<dbReference type="InterPro" id="IPR003190">
    <property type="entry name" value="Asp_decarbox"/>
</dbReference>
<dbReference type="NCBIfam" id="TIGR00223">
    <property type="entry name" value="panD"/>
    <property type="match status" value="1"/>
</dbReference>
<dbReference type="PANTHER" id="PTHR21012">
    <property type="entry name" value="ASPARTATE 1-DECARBOXYLASE"/>
    <property type="match status" value="1"/>
</dbReference>
<dbReference type="PANTHER" id="PTHR21012:SF0">
    <property type="entry name" value="ASPARTATE 1-DECARBOXYLASE"/>
    <property type="match status" value="1"/>
</dbReference>
<dbReference type="Pfam" id="PF02261">
    <property type="entry name" value="Asp_decarbox"/>
    <property type="match status" value="1"/>
</dbReference>
<dbReference type="PIRSF" id="PIRSF006246">
    <property type="entry name" value="Asp_decarbox"/>
    <property type="match status" value="1"/>
</dbReference>
<dbReference type="SUPFAM" id="SSF50692">
    <property type="entry name" value="ADC-like"/>
    <property type="match status" value="1"/>
</dbReference>
<feature type="chain" id="PRO_1000080918" description="Aspartate 1-decarboxylase beta chain" evidence="1">
    <location>
        <begin position="1"/>
        <end position="24"/>
    </location>
</feature>
<feature type="chain" id="PRO_1000080919" description="Aspartate 1-decarboxylase alpha chain" evidence="1">
    <location>
        <begin position="25"/>
        <end position="126"/>
    </location>
</feature>
<feature type="active site" description="Schiff-base intermediate with substrate; via pyruvic acid" evidence="1">
    <location>
        <position position="25"/>
    </location>
</feature>
<feature type="active site" description="Proton donor" evidence="1">
    <location>
        <position position="58"/>
    </location>
</feature>
<feature type="binding site" evidence="1">
    <location>
        <position position="57"/>
    </location>
    <ligand>
        <name>substrate</name>
    </ligand>
</feature>
<feature type="binding site" evidence="1">
    <location>
        <begin position="73"/>
        <end position="75"/>
    </location>
    <ligand>
        <name>substrate</name>
    </ligand>
</feature>
<feature type="modified residue" description="Pyruvic acid (Ser)" evidence="1">
    <location>
        <position position="25"/>
    </location>
</feature>
<protein>
    <recommendedName>
        <fullName evidence="1">Aspartate 1-decarboxylase</fullName>
        <ecNumber evidence="1">4.1.1.11</ecNumber>
    </recommendedName>
    <alternativeName>
        <fullName evidence="1">Aspartate alpha-decarboxylase</fullName>
    </alternativeName>
    <component>
        <recommendedName>
            <fullName evidence="1">Aspartate 1-decarboxylase beta chain</fullName>
        </recommendedName>
    </component>
    <component>
        <recommendedName>
            <fullName evidence="1">Aspartate 1-decarboxylase alpha chain</fullName>
        </recommendedName>
    </component>
</protein>
<accession>B1IQK9</accession>
<name>PAND_ECOLC</name>
<sequence length="126" mass="13834">MIRTMLQGKLHRVKVTHADLHYEGSCAIDQDFLDAAGILENEAIDIWNVTNGKRFSTYAIAAERGSRIISVNGAAAHCASVGDIVIIASFVTMPDEEARTWRPNVAYFEGDNEMKRTAKAIPVQVA</sequence>
<comment type="function">
    <text evidence="1">Catalyzes the pyruvoyl-dependent decarboxylation of aspartate to produce beta-alanine.</text>
</comment>
<comment type="catalytic activity">
    <reaction evidence="1">
        <text>L-aspartate + H(+) = beta-alanine + CO2</text>
        <dbReference type="Rhea" id="RHEA:19497"/>
        <dbReference type="ChEBI" id="CHEBI:15378"/>
        <dbReference type="ChEBI" id="CHEBI:16526"/>
        <dbReference type="ChEBI" id="CHEBI:29991"/>
        <dbReference type="ChEBI" id="CHEBI:57966"/>
        <dbReference type="EC" id="4.1.1.11"/>
    </reaction>
</comment>
<comment type="cofactor">
    <cofactor evidence="1">
        <name>pyruvate</name>
        <dbReference type="ChEBI" id="CHEBI:15361"/>
    </cofactor>
    <text evidence="1">Binds 1 pyruvoyl group covalently per subunit.</text>
</comment>
<comment type="pathway">
    <text evidence="1">Cofactor biosynthesis; (R)-pantothenate biosynthesis; beta-alanine from L-aspartate: step 1/1.</text>
</comment>
<comment type="subunit">
    <text evidence="1">Heterooctamer of four alpha and four beta subunits.</text>
</comment>
<comment type="subcellular location">
    <subcellularLocation>
        <location evidence="1">Cytoplasm</location>
    </subcellularLocation>
</comment>
<comment type="PTM">
    <text evidence="1">Is synthesized initially as an inactive proenzyme, which is activated by self-cleavage at a specific serine bond to produce a beta-subunit with a hydroxyl group at its C-terminus and an alpha-subunit with a pyruvoyl group at its N-terminus.</text>
</comment>
<comment type="similarity">
    <text evidence="1">Belongs to the PanD family.</text>
</comment>
<evidence type="ECO:0000255" key="1">
    <source>
        <dbReference type="HAMAP-Rule" id="MF_00446"/>
    </source>
</evidence>
<keyword id="KW-0068">Autocatalytic cleavage</keyword>
<keyword id="KW-0963">Cytoplasm</keyword>
<keyword id="KW-0210">Decarboxylase</keyword>
<keyword id="KW-0456">Lyase</keyword>
<keyword id="KW-0566">Pantothenate biosynthesis</keyword>
<keyword id="KW-0670">Pyruvate</keyword>
<keyword id="KW-0704">Schiff base</keyword>
<keyword id="KW-0865">Zymogen</keyword>
<proteinExistence type="inferred from homology"/>